<gene>
    <name evidence="1" type="primary">hisZ</name>
    <name type="ordered locus">glr2390</name>
</gene>
<keyword id="KW-0028">Amino-acid biosynthesis</keyword>
<keyword id="KW-0963">Cytoplasm</keyword>
<keyword id="KW-0368">Histidine biosynthesis</keyword>
<keyword id="KW-1185">Reference proteome</keyword>
<evidence type="ECO:0000255" key="1">
    <source>
        <dbReference type="HAMAP-Rule" id="MF_00125"/>
    </source>
</evidence>
<name>HISZ_GLOVI</name>
<feature type="chain" id="PRO_0000171036" description="ATP phosphoribosyltransferase regulatory subunit">
    <location>
        <begin position="1"/>
        <end position="392"/>
    </location>
</feature>
<comment type="function">
    <text evidence="1">Required for the first step of histidine biosynthesis. May allow the feedback regulation of ATP phosphoribosyltransferase activity by histidine.</text>
</comment>
<comment type="pathway">
    <text evidence="1">Amino-acid biosynthesis; L-histidine biosynthesis; L-histidine from 5-phospho-alpha-D-ribose 1-diphosphate: step 1/9.</text>
</comment>
<comment type="subunit">
    <text evidence="1">Heteromultimer composed of HisG and HisZ subunits.</text>
</comment>
<comment type="subcellular location">
    <subcellularLocation>
        <location evidence="1">Cytoplasm</location>
    </subcellularLocation>
</comment>
<comment type="miscellaneous">
    <text>This function is generally fulfilled by the C-terminal part of HisG, which is missing in some bacteria such as this one.</text>
</comment>
<comment type="similarity">
    <text evidence="1">Belongs to the class-II aminoacyl-tRNA synthetase family. HisZ subfamily.</text>
</comment>
<organism>
    <name type="scientific">Gloeobacter violaceus (strain ATCC 29082 / PCC 7421)</name>
    <dbReference type="NCBI Taxonomy" id="251221"/>
    <lineage>
        <taxon>Bacteria</taxon>
        <taxon>Bacillati</taxon>
        <taxon>Cyanobacteriota</taxon>
        <taxon>Cyanophyceae</taxon>
        <taxon>Gloeobacterales</taxon>
        <taxon>Gloeobacteraceae</taxon>
        <taxon>Gloeobacter</taxon>
    </lineage>
</organism>
<accession>Q7NHZ4</accession>
<dbReference type="EMBL" id="BA000045">
    <property type="protein sequence ID" value="BAC90331.1"/>
    <property type="molecule type" value="Genomic_DNA"/>
</dbReference>
<dbReference type="RefSeq" id="NP_925336.1">
    <property type="nucleotide sequence ID" value="NC_005125.1"/>
</dbReference>
<dbReference type="RefSeq" id="WP_011142386.1">
    <property type="nucleotide sequence ID" value="NC_005125.1"/>
</dbReference>
<dbReference type="SMR" id="Q7NHZ4"/>
<dbReference type="STRING" id="251221.gene:10759887"/>
<dbReference type="EnsemblBacteria" id="BAC90331">
    <property type="protein sequence ID" value="BAC90331"/>
    <property type="gene ID" value="BAC90331"/>
</dbReference>
<dbReference type="KEGG" id="gvi:glr2390"/>
<dbReference type="PATRIC" id="fig|251221.4.peg.2429"/>
<dbReference type="eggNOG" id="COG3705">
    <property type="taxonomic scope" value="Bacteria"/>
</dbReference>
<dbReference type="HOGENOM" id="CLU_025113_0_2_3"/>
<dbReference type="InParanoid" id="Q7NHZ4"/>
<dbReference type="OrthoDB" id="9800814at2"/>
<dbReference type="PhylomeDB" id="Q7NHZ4"/>
<dbReference type="UniPathway" id="UPA00031">
    <property type="reaction ID" value="UER00006"/>
</dbReference>
<dbReference type="Proteomes" id="UP000000557">
    <property type="component" value="Chromosome"/>
</dbReference>
<dbReference type="GO" id="GO:0005737">
    <property type="term" value="C:cytoplasm"/>
    <property type="evidence" value="ECO:0007669"/>
    <property type="project" value="UniProtKB-SubCell"/>
</dbReference>
<dbReference type="GO" id="GO:0004821">
    <property type="term" value="F:histidine-tRNA ligase activity"/>
    <property type="evidence" value="ECO:0000318"/>
    <property type="project" value="GO_Central"/>
</dbReference>
<dbReference type="GO" id="GO:0006427">
    <property type="term" value="P:histidyl-tRNA aminoacylation"/>
    <property type="evidence" value="ECO:0000318"/>
    <property type="project" value="GO_Central"/>
</dbReference>
<dbReference type="GO" id="GO:0000105">
    <property type="term" value="P:L-histidine biosynthetic process"/>
    <property type="evidence" value="ECO:0007669"/>
    <property type="project" value="UniProtKB-UniRule"/>
</dbReference>
<dbReference type="CDD" id="cd00773">
    <property type="entry name" value="HisRS-like_core"/>
    <property type="match status" value="1"/>
</dbReference>
<dbReference type="FunFam" id="3.30.930.10:FF:000218">
    <property type="entry name" value="ATP phosphoribosyltransferase regulatory subunit"/>
    <property type="match status" value="1"/>
</dbReference>
<dbReference type="Gene3D" id="3.30.930.10">
    <property type="entry name" value="Bira Bifunctional Protein, Domain 2"/>
    <property type="match status" value="1"/>
</dbReference>
<dbReference type="HAMAP" id="MF_00125">
    <property type="entry name" value="HisZ"/>
    <property type="match status" value="1"/>
</dbReference>
<dbReference type="InterPro" id="IPR006195">
    <property type="entry name" value="aa-tRNA-synth_II"/>
</dbReference>
<dbReference type="InterPro" id="IPR045864">
    <property type="entry name" value="aa-tRNA-synth_II/BPL/LPL"/>
</dbReference>
<dbReference type="InterPro" id="IPR041715">
    <property type="entry name" value="HisRS-like_core"/>
</dbReference>
<dbReference type="InterPro" id="IPR004516">
    <property type="entry name" value="HisRS/HisZ"/>
</dbReference>
<dbReference type="InterPro" id="IPR004517">
    <property type="entry name" value="HisZ"/>
</dbReference>
<dbReference type="NCBIfam" id="TIGR00443">
    <property type="entry name" value="hisZ_biosyn_reg"/>
    <property type="match status" value="1"/>
</dbReference>
<dbReference type="NCBIfam" id="NF008940">
    <property type="entry name" value="PRK12292.2-3"/>
    <property type="match status" value="1"/>
</dbReference>
<dbReference type="PANTHER" id="PTHR43707:SF1">
    <property type="entry name" value="HISTIDINE--TRNA LIGASE, MITOCHONDRIAL-RELATED"/>
    <property type="match status" value="1"/>
</dbReference>
<dbReference type="PANTHER" id="PTHR43707">
    <property type="entry name" value="HISTIDYL-TRNA SYNTHETASE"/>
    <property type="match status" value="1"/>
</dbReference>
<dbReference type="Pfam" id="PF13393">
    <property type="entry name" value="tRNA-synt_His"/>
    <property type="match status" value="1"/>
</dbReference>
<dbReference type="PIRSF" id="PIRSF001549">
    <property type="entry name" value="His-tRNA_synth"/>
    <property type="match status" value="1"/>
</dbReference>
<dbReference type="SUPFAM" id="SSF55681">
    <property type="entry name" value="Class II aaRS and biotin synthetases"/>
    <property type="match status" value="1"/>
</dbReference>
<dbReference type="PROSITE" id="PS50862">
    <property type="entry name" value="AA_TRNA_LIGASE_II"/>
    <property type="match status" value="1"/>
</dbReference>
<proteinExistence type="inferred from homology"/>
<protein>
    <recommendedName>
        <fullName evidence="1">ATP phosphoribosyltransferase regulatory subunit</fullName>
    </recommendedName>
</protein>
<sequence>MYQPPTGVRDLLPLDVSQKLWIEQRLQRVFTRWGYQRIITPTLERMETLQASGSVDLQAILQLRDAEGVSLGLRPDPTPSLARAVATRLADAPLPVRLSYQMNVFRSTTQPQEFYQAGVELIGAGGVLADAEVLLVLAECLAELAPPDWTLILGAVAFTRSWLAQVAEPARHRLRRAMAELDRVAILAEAGIDEAVRSQLLLLFDLRGEPEMVLSKASSLPMSDAQRAELAELETLTGWLRGRSVPVVLDLSLVEAFDYYTGLIFEVSAGGRLIGRGGRYDHLLGSYGKPAPGAGFALNLEALQQVLLPTGKLPGRTVGGGFLVVPDGPDAWEAALAEADKLRCAPGERVEIELLGRTGEEAIAHGRALGAAVVRWVHPDGSTTDCDLAVIQ</sequence>
<reference key="1">
    <citation type="journal article" date="2003" name="DNA Res.">
        <title>Complete genome structure of Gloeobacter violaceus PCC 7421, a cyanobacterium that lacks thylakoids.</title>
        <authorList>
            <person name="Nakamura Y."/>
            <person name="Kaneko T."/>
            <person name="Sato S."/>
            <person name="Mimuro M."/>
            <person name="Miyashita H."/>
            <person name="Tsuchiya T."/>
            <person name="Sasamoto S."/>
            <person name="Watanabe A."/>
            <person name="Kawashima K."/>
            <person name="Kishida Y."/>
            <person name="Kiyokawa C."/>
            <person name="Kohara M."/>
            <person name="Matsumoto M."/>
            <person name="Matsuno A."/>
            <person name="Nakazaki N."/>
            <person name="Shimpo S."/>
            <person name="Takeuchi C."/>
            <person name="Yamada M."/>
            <person name="Tabata S."/>
        </authorList>
    </citation>
    <scope>NUCLEOTIDE SEQUENCE [LARGE SCALE GENOMIC DNA]</scope>
    <source>
        <strain>ATCC 29082 / PCC 7421</strain>
    </source>
</reference>